<feature type="chain" id="PRO_0000100945" description="Threonine--tRNA ligase">
    <location>
        <begin position="1"/>
        <end position="581"/>
    </location>
</feature>
<feature type="region of interest" description="Catalytic" evidence="1">
    <location>
        <begin position="185"/>
        <end position="478"/>
    </location>
</feature>
<feature type="binding site" evidence="1">
    <location>
        <position position="278"/>
    </location>
    <ligand>
        <name>Zn(2+)</name>
        <dbReference type="ChEBI" id="CHEBI:29105"/>
    </ligand>
</feature>
<feature type="binding site" evidence="1">
    <location>
        <position position="329"/>
    </location>
    <ligand>
        <name>Zn(2+)</name>
        <dbReference type="ChEBI" id="CHEBI:29105"/>
    </ligand>
</feature>
<feature type="binding site" evidence="1">
    <location>
        <position position="455"/>
    </location>
    <ligand>
        <name>Zn(2+)</name>
        <dbReference type="ChEBI" id="CHEBI:29105"/>
    </ligand>
</feature>
<accession>O51662</accession>
<keyword id="KW-0030">Aminoacyl-tRNA synthetase</keyword>
<keyword id="KW-0067">ATP-binding</keyword>
<keyword id="KW-0963">Cytoplasm</keyword>
<keyword id="KW-0436">Ligase</keyword>
<keyword id="KW-0479">Metal-binding</keyword>
<keyword id="KW-0547">Nucleotide-binding</keyword>
<keyword id="KW-0648">Protein biosynthesis</keyword>
<keyword id="KW-1185">Reference proteome</keyword>
<keyword id="KW-0694">RNA-binding</keyword>
<keyword id="KW-0820">tRNA-binding</keyword>
<keyword id="KW-0862">Zinc</keyword>
<sequence>MSKDLDKEDILYKKRHSIAHVMAEAVLDLFPNTKIAIGPPIKDGFYYDFEFKKQITEDSLLDIENRMREILKTGSSFEKEIISVEQALEIFKDEPYKIDLIKNFDLQNEVSIYKSHNFVDLCRGPHVENMNKIDPKAFKLTSIAGAYWRGSEKNPMLTRIYGTLWNNEKELRSYLNLREEIKKRDHRKLGKELDLFSIHEEIGPGLVFFHPNGAKIRALIEDFWREEHSKNGYDILFTPHIGKSWLWQTSGHLDFYKDSMFEKIEMDKSDYYLKPMNCPFHIAIYNTGKHSYRDLPFRWAELGTVYRYEKIGALHGMMRARGFTQDDAHIICTHSQVLDEIKEVLRFAIYMWSKFGFSNPKAYLSTKPDKSVGNDSDWEMSLKVLEETLSDFEVPYEIDKGGGAFYGPKIDLKIVDSLEREWQMSTIQFDFNLPERFNMTYTAEDGKEKRPFMIHRALLGSIERFFGILVEHYGGAFPLWLSPVQVVIIPVNNIVEDYAIKVFNKFKNEGIRIKLDNSSSRMNAKIREYQAKKIPYMFIIGEREATEERISIRTRTNEQINGMKLDEALKFILFKIRDKEI</sequence>
<gene>
    <name evidence="1" type="primary">thrS</name>
    <name type="ordered locus">BB_0720</name>
</gene>
<protein>
    <recommendedName>
        <fullName evidence="1">Threonine--tRNA ligase</fullName>
        <ecNumber evidence="1">6.1.1.3</ecNumber>
    </recommendedName>
    <alternativeName>
        <fullName evidence="1">Threonyl-tRNA synthetase</fullName>
        <shortName evidence="1">ThrRS</shortName>
    </alternativeName>
</protein>
<name>SYT_BORBU</name>
<reference key="1">
    <citation type="journal article" date="1997" name="Nature">
        <title>Genomic sequence of a Lyme disease spirochaete, Borrelia burgdorferi.</title>
        <authorList>
            <person name="Fraser C.M."/>
            <person name="Casjens S."/>
            <person name="Huang W.M."/>
            <person name="Sutton G.G."/>
            <person name="Clayton R.A."/>
            <person name="Lathigra R."/>
            <person name="White O."/>
            <person name="Ketchum K.A."/>
            <person name="Dodson R.J."/>
            <person name="Hickey E.K."/>
            <person name="Gwinn M.L."/>
            <person name="Dougherty B.A."/>
            <person name="Tomb J.-F."/>
            <person name="Fleischmann R.D."/>
            <person name="Richardson D.L."/>
            <person name="Peterson J.D."/>
            <person name="Kerlavage A.R."/>
            <person name="Quackenbush J."/>
            <person name="Salzberg S.L."/>
            <person name="Hanson M."/>
            <person name="van Vugt R."/>
            <person name="Palmer N."/>
            <person name="Adams M.D."/>
            <person name="Gocayne J.D."/>
            <person name="Weidman J.F."/>
            <person name="Utterback T.R."/>
            <person name="Watthey L."/>
            <person name="McDonald L.A."/>
            <person name="Artiach P."/>
            <person name="Bowman C."/>
            <person name="Garland S.A."/>
            <person name="Fujii C."/>
            <person name="Cotton M.D."/>
            <person name="Horst K."/>
            <person name="Roberts K.M."/>
            <person name="Hatch B."/>
            <person name="Smith H.O."/>
            <person name="Venter J.C."/>
        </authorList>
    </citation>
    <scope>NUCLEOTIDE SEQUENCE [LARGE SCALE GENOMIC DNA]</scope>
    <source>
        <strain>ATCC 35210 / DSM 4680 / CIP 102532 / B31</strain>
    </source>
</reference>
<proteinExistence type="inferred from homology"/>
<dbReference type="EC" id="6.1.1.3" evidence="1"/>
<dbReference type="EMBL" id="AE000783">
    <property type="status" value="NOT_ANNOTATED_CDS"/>
    <property type="molecule type" value="Genomic_DNA"/>
</dbReference>
<dbReference type="PIR" id="G70189">
    <property type="entry name" value="G70189"/>
</dbReference>
<dbReference type="RefSeq" id="WP_002665762.1">
    <property type="nucleotide sequence ID" value="NC_001318.1"/>
</dbReference>
<dbReference type="RefSeq" id="YP_008686586.1">
    <property type="nucleotide sequence ID" value="NC_001318.1"/>
</dbReference>
<dbReference type="SMR" id="O51662"/>
<dbReference type="PATRIC" id="fig|224326.49.peg.1111"/>
<dbReference type="OrthoDB" id="9802304at2"/>
<dbReference type="Proteomes" id="UP000001807">
    <property type="component" value="Chromosome"/>
</dbReference>
<dbReference type="GO" id="GO:0005737">
    <property type="term" value="C:cytoplasm"/>
    <property type="evidence" value="ECO:0007669"/>
    <property type="project" value="UniProtKB-SubCell"/>
</dbReference>
<dbReference type="GO" id="GO:0005524">
    <property type="term" value="F:ATP binding"/>
    <property type="evidence" value="ECO:0007669"/>
    <property type="project" value="UniProtKB-UniRule"/>
</dbReference>
<dbReference type="GO" id="GO:0046872">
    <property type="term" value="F:metal ion binding"/>
    <property type="evidence" value="ECO:0007669"/>
    <property type="project" value="UniProtKB-KW"/>
</dbReference>
<dbReference type="GO" id="GO:0004829">
    <property type="term" value="F:threonine-tRNA ligase activity"/>
    <property type="evidence" value="ECO:0007669"/>
    <property type="project" value="UniProtKB-UniRule"/>
</dbReference>
<dbReference type="GO" id="GO:0000049">
    <property type="term" value="F:tRNA binding"/>
    <property type="evidence" value="ECO:0007669"/>
    <property type="project" value="UniProtKB-KW"/>
</dbReference>
<dbReference type="GO" id="GO:0006435">
    <property type="term" value="P:threonyl-tRNA aminoacylation"/>
    <property type="evidence" value="ECO:0007669"/>
    <property type="project" value="UniProtKB-UniRule"/>
</dbReference>
<dbReference type="CDD" id="cd00860">
    <property type="entry name" value="ThrRS_anticodon"/>
    <property type="match status" value="1"/>
</dbReference>
<dbReference type="CDD" id="cd00771">
    <property type="entry name" value="ThrRS_core"/>
    <property type="match status" value="1"/>
</dbReference>
<dbReference type="FunFam" id="3.30.930.10:FF:000019">
    <property type="entry name" value="Threonine--tRNA ligase"/>
    <property type="match status" value="1"/>
</dbReference>
<dbReference type="FunFam" id="3.40.50.800:FF:000001">
    <property type="entry name" value="Threonine--tRNA ligase"/>
    <property type="match status" value="1"/>
</dbReference>
<dbReference type="FunFam" id="3.30.980.10:FF:000005">
    <property type="entry name" value="Threonyl-tRNA synthetase, mitochondrial"/>
    <property type="match status" value="1"/>
</dbReference>
<dbReference type="Gene3D" id="3.30.54.20">
    <property type="match status" value="1"/>
</dbReference>
<dbReference type="Gene3D" id="3.40.50.800">
    <property type="entry name" value="Anticodon-binding domain"/>
    <property type="match status" value="1"/>
</dbReference>
<dbReference type="Gene3D" id="3.30.930.10">
    <property type="entry name" value="Bira Bifunctional Protein, Domain 2"/>
    <property type="match status" value="1"/>
</dbReference>
<dbReference type="Gene3D" id="3.30.980.10">
    <property type="entry name" value="Threonyl-trna Synthetase, Chain A, domain 2"/>
    <property type="match status" value="1"/>
</dbReference>
<dbReference type="HAMAP" id="MF_00184">
    <property type="entry name" value="Thr_tRNA_synth"/>
    <property type="match status" value="1"/>
</dbReference>
<dbReference type="InterPro" id="IPR002314">
    <property type="entry name" value="aa-tRNA-synt_IIb"/>
</dbReference>
<dbReference type="InterPro" id="IPR006195">
    <property type="entry name" value="aa-tRNA-synth_II"/>
</dbReference>
<dbReference type="InterPro" id="IPR045864">
    <property type="entry name" value="aa-tRNA-synth_II/BPL/LPL"/>
</dbReference>
<dbReference type="InterPro" id="IPR004154">
    <property type="entry name" value="Anticodon-bd"/>
</dbReference>
<dbReference type="InterPro" id="IPR036621">
    <property type="entry name" value="Anticodon-bd_dom_sf"/>
</dbReference>
<dbReference type="InterPro" id="IPR002320">
    <property type="entry name" value="Thr-tRNA-ligase_IIa"/>
</dbReference>
<dbReference type="InterPro" id="IPR018163">
    <property type="entry name" value="Thr/Ala-tRNA-synth_IIc_edit"/>
</dbReference>
<dbReference type="InterPro" id="IPR047246">
    <property type="entry name" value="ThrRS_anticodon"/>
</dbReference>
<dbReference type="InterPro" id="IPR033728">
    <property type="entry name" value="ThrRS_core"/>
</dbReference>
<dbReference type="InterPro" id="IPR012947">
    <property type="entry name" value="tRNA_SAD"/>
</dbReference>
<dbReference type="NCBIfam" id="TIGR00418">
    <property type="entry name" value="thrS"/>
    <property type="match status" value="1"/>
</dbReference>
<dbReference type="PANTHER" id="PTHR11451:SF44">
    <property type="entry name" value="THREONINE--TRNA LIGASE, CHLOROPLASTIC_MITOCHONDRIAL 2"/>
    <property type="match status" value="1"/>
</dbReference>
<dbReference type="PANTHER" id="PTHR11451">
    <property type="entry name" value="THREONINE-TRNA LIGASE"/>
    <property type="match status" value="1"/>
</dbReference>
<dbReference type="Pfam" id="PF03129">
    <property type="entry name" value="HGTP_anticodon"/>
    <property type="match status" value="1"/>
</dbReference>
<dbReference type="Pfam" id="PF00587">
    <property type="entry name" value="tRNA-synt_2b"/>
    <property type="match status" value="1"/>
</dbReference>
<dbReference type="Pfam" id="PF07973">
    <property type="entry name" value="tRNA_SAD"/>
    <property type="match status" value="1"/>
</dbReference>
<dbReference type="PRINTS" id="PR01047">
    <property type="entry name" value="TRNASYNTHTHR"/>
</dbReference>
<dbReference type="SMART" id="SM00863">
    <property type="entry name" value="tRNA_SAD"/>
    <property type="match status" value="1"/>
</dbReference>
<dbReference type="SUPFAM" id="SSF52954">
    <property type="entry name" value="Class II aaRS ABD-related"/>
    <property type="match status" value="1"/>
</dbReference>
<dbReference type="SUPFAM" id="SSF55681">
    <property type="entry name" value="Class II aaRS and biotin synthetases"/>
    <property type="match status" value="1"/>
</dbReference>
<dbReference type="SUPFAM" id="SSF55186">
    <property type="entry name" value="ThrRS/AlaRS common domain"/>
    <property type="match status" value="1"/>
</dbReference>
<dbReference type="PROSITE" id="PS50862">
    <property type="entry name" value="AA_TRNA_LIGASE_II"/>
    <property type="match status" value="1"/>
</dbReference>
<organism>
    <name type="scientific">Borreliella burgdorferi (strain ATCC 35210 / DSM 4680 / CIP 102532 / B31)</name>
    <name type="common">Borrelia burgdorferi</name>
    <dbReference type="NCBI Taxonomy" id="224326"/>
    <lineage>
        <taxon>Bacteria</taxon>
        <taxon>Pseudomonadati</taxon>
        <taxon>Spirochaetota</taxon>
        <taxon>Spirochaetia</taxon>
        <taxon>Spirochaetales</taxon>
        <taxon>Borreliaceae</taxon>
        <taxon>Borreliella</taxon>
    </lineage>
</organism>
<evidence type="ECO:0000255" key="1">
    <source>
        <dbReference type="HAMAP-Rule" id="MF_00184"/>
    </source>
</evidence>
<comment type="function">
    <text evidence="1">Catalyzes the attachment of threonine to tRNA(Thr) in a two-step reaction: L-threonine is first activated by ATP to form Thr-AMP and then transferred to the acceptor end of tRNA(Thr). Also edits incorrectly charged L-seryl-tRNA(Thr).</text>
</comment>
<comment type="catalytic activity">
    <reaction evidence="1">
        <text>tRNA(Thr) + L-threonine + ATP = L-threonyl-tRNA(Thr) + AMP + diphosphate + H(+)</text>
        <dbReference type="Rhea" id="RHEA:24624"/>
        <dbReference type="Rhea" id="RHEA-COMP:9670"/>
        <dbReference type="Rhea" id="RHEA-COMP:9704"/>
        <dbReference type="ChEBI" id="CHEBI:15378"/>
        <dbReference type="ChEBI" id="CHEBI:30616"/>
        <dbReference type="ChEBI" id="CHEBI:33019"/>
        <dbReference type="ChEBI" id="CHEBI:57926"/>
        <dbReference type="ChEBI" id="CHEBI:78442"/>
        <dbReference type="ChEBI" id="CHEBI:78534"/>
        <dbReference type="ChEBI" id="CHEBI:456215"/>
        <dbReference type="EC" id="6.1.1.3"/>
    </reaction>
</comment>
<comment type="cofactor">
    <cofactor evidence="1">
        <name>Zn(2+)</name>
        <dbReference type="ChEBI" id="CHEBI:29105"/>
    </cofactor>
    <text evidence="1">Binds 1 zinc ion per subunit.</text>
</comment>
<comment type="subunit">
    <text evidence="1">Homodimer.</text>
</comment>
<comment type="subcellular location">
    <subcellularLocation>
        <location evidence="1">Cytoplasm</location>
    </subcellularLocation>
</comment>
<comment type="similarity">
    <text evidence="1">Belongs to the class-II aminoacyl-tRNA synthetase family.</text>
</comment>